<sequence length="413" mass="45118">MAAATNRFRALYSSSRVATPQAGSASYLSYRGYATTDPSSATGGASTAGKRRTTFTDKLNAGPSFGDFVSGGRDNAPLDPSEAYALKTALVGPAGRKKEMTRLPSWLKTPIPDSKNYQRLKKDLRGLNLHTVCEEARCPNISDCWGGGDKAAATATIMLMGDTCTRGCRFCSVKTSRAPPPLDPHEPENTAEAISRWGLGYVVLTSVDRDDLADGGARHFAETVIKIKQKAPNILVECLTGDYAGDLEMVGVVARSGLDVYAHNVETVEALTPHVRDRRATFQQSLRVLEAAKKAKPSLITKTSLMLGLGETEEQLWDALRQLRAVNVDVVTFGQYMRPTKRHMAVHEYVTPDRFELWRQRALDMGFLYCASGPLVRSSYKAGEAFIENVLKKRRSGAPEVSHNTVPVDEATR</sequence>
<comment type="function">
    <text evidence="1">Catalyzes the radical-mediated insertion of two sulfur atoms into the C-6 and C-8 positions of the octanoyl moiety bound to the lipoyl domains of lipoate-dependent enzymes, thereby converting the octanoylated domains into lipoylated derivatives.</text>
</comment>
<comment type="catalytic activity">
    <reaction evidence="1">
        <text>[[Fe-S] cluster scaffold protein carrying a second [4Fe-4S](2+) cluster] + N(6)-octanoyl-L-lysyl-[protein] + 2 oxidized [2Fe-2S]-[ferredoxin] + 2 S-adenosyl-L-methionine + 4 H(+) = [[Fe-S] cluster scaffold protein] + N(6)-[(R)-dihydrolipoyl]-L-lysyl-[protein] + 4 Fe(3+) + 2 hydrogen sulfide + 2 5'-deoxyadenosine + 2 L-methionine + 2 reduced [2Fe-2S]-[ferredoxin]</text>
        <dbReference type="Rhea" id="RHEA:16585"/>
        <dbReference type="Rhea" id="RHEA-COMP:9928"/>
        <dbReference type="Rhea" id="RHEA-COMP:10000"/>
        <dbReference type="Rhea" id="RHEA-COMP:10001"/>
        <dbReference type="Rhea" id="RHEA-COMP:10475"/>
        <dbReference type="Rhea" id="RHEA-COMP:14568"/>
        <dbReference type="Rhea" id="RHEA-COMP:14569"/>
        <dbReference type="ChEBI" id="CHEBI:15378"/>
        <dbReference type="ChEBI" id="CHEBI:17319"/>
        <dbReference type="ChEBI" id="CHEBI:29034"/>
        <dbReference type="ChEBI" id="CHEBI:29919"/>
        <dbReference type="ChEBI" id="CHEBI:33722"/>
        <dbReference type="ChEBI" id="CHEBI:33737"/>
        <dbReference type="ChEBI" id="CHEBI:33738"/>
        <dbReference type="ChEBI" id="CHEBI:57844"/>
        <dbReference type="ChEBI" id="CHEBI:59789"/>
        <dbReference type="ChEBI" id="CHEBI:78809"/>
        <dbReference type="ChEBI" id="CHEBI:83100"/>
        <dbReference type="EC" id="2.8.1.8"/>
    </reaction>
</comment>
<comment type="cofactor">
    <cofactor evidence="1">
        <name>[4Fe-4S] cluster</name>
        <dbReference type="ChEBI" id="CHEBI:49883"/>
    </cofactor>
    <text evidence="1">Binds 2 [4Fe-4S] clusters per subunit. One cluster is coordinated with 3 cysteines and an exchangeable S-adenosyl-L-methionine.</text>
</comment>
<comment type="pathway">
    <text evidence="1">Protein modification; protein lipoylation via endogenous pathway; protein N(6)-(lipoyl)lysine from octanoyl-[acyl-carrier-protein]: step 2/2.</text>
</comment>
<comment type="subcellular location">
    <subcellularLocation>
        <location evidence="1">Mitochondrion</location>
    </subcellularLocation>
</comment>
<comment type="similarity">
    <text evidence="1">Belongs to the radical SAM superfamily. Lipoyl synthase family.</text>
</comment>
<dbReference type="EC" id="2.8.1.8" evidence="1"/>
<dbReference type="EMBL" id="AACD01000201">
    <property type="protein sequence ID" value="EAA66777.1"/>
    <property type="molecule type" value="Genomic_DNA"/>
</dbReference>
<dbReference type="EMBL" id="BN001303">
    <property type="protein sequence ID" value="CBF76818.1"/>
    <property type="molecule type" value="Genomic_DNA"/>
</dbReference>
<dbReference type="RefSeq" id="XP_868868.1">
    <property type="nucleotide sequence ID" value="XM_863775.1"/>
</dbReference>
<dbReference type="SMR" id="Q5AQE4"/>
<dbReference type="FunCoup" id="Q5AQE4">
    <property type="interactions" value="561"/>
</dbReference>
<dbReference type="STRING" id="227321.Q5AQE4"/>
<dbReference type="EnsemblFungi" id="CBF76818">
    <property type="protein sequence ID" value="CBF76818"/>
    <property type="gene ID" value="ANIA_09486"/>
</dbReference>
<dbReference type="KEGG" id="ani:ANIA_09486"/>
<dbReference type="VEuPathDB" id="FungiDB:AN9486"/>
<dbReference type="eggNOG" id="KOG2672">
    <property type="taxonomic scope" value="Eukaryota"/>
</dbReference>
<dbReference type="HOGENOM" id="CLU_033144_2_0_1"/>
<dbReference type="InParanoid" id="Q5AQE4"/>
<dbReference type="OMA" id="PYCDIDF"/>
<dbReference type="OrthoDB" id="3231at2759"/>
<dbReference type="UniPathway" id="UPA00538">
    <property type="reaction ID" value="UER00593"/>
</dbReference>
<dbReference type="Proteomes" id="UP000000560">
    <property type="component" value="Chromosome III"/>
</dbReference>
<dbReference type="GO" id="GO:0005739">
    <property type="term" value="C:mitochondrion"/>
    <property type="evidence" value="ECO:0000318"/>
    <property type="project" value="GO_Central"/>
</dbReference>
<dbReference type="GO" id="GO:0051539">
    <property type="term" value="F:4 iron, 4 sulfur cluster binding"/>
    <property type="evidence" value="ECO:0007669"/>
    <property type="project" value="UniProtKB-UniRule"/>
</dbReference>
<dbReference type="GO" id="GO:0016992">
    <property type="term" value="F:lipoate synthase activity"/>
    <property type="evidence" value="ECO:0000318"/>
    <property type="project" value="GO_Central"/>
</dbReference>
<dbReference type="GO" id="GO:0046872">
    <property type="term" value="F:metal ion binding"/>
    <property type="evidence" value="ECO:0007669"/>
    <property type="project" value="UniProtKB-KW"/>
</dbReference>
<dbReference type="GO" id="GO:0009107">
    <property type="term" value="P:lipoate biosynthetic process"/>
    <property type="evidence" value="ECO:0000318"/>
    <property type="project" value="GO_Central"/>
</dbReference>
<dbReference type="CDD" id="cd01335">
    <property type="entry name" value="Radical_SAM"/>
    <property type="match status" value="1"/>
</dbReference>
<dbReference type="FunFam" id="3.20.20.70:FF:000036">
    <property type="entry name" value="Lipoyl synthase, mitochondrial"/>
    <property type="match status" value="1"/>
</dbReference>
<dbReference type="Gene3D" id="3.20.20.70">
    <property type="entry name" value="Aldolase class I"/>
    <property type="match status" value="1"/>
</dbReference>
<dbReference type="HAMAP" id="MF_00206">
    <property type="entry name" value="Lipoyl_synth"/>
    <property type="match status" value="1"/>
</dbReference>
<dbReference type="InterPro" id="IPR013785">
    <property type="entry name" value="Aldolase_TIM"/>
</dbReference>
<dbReference type="InterPro" id="IPR006638">
    <property type="entry name" value="Elp3/MiaA/NifB-like_rSAM"/>
</dbReference>
<dbReference type="InterPro" id="IPR031691">
    <property type="entry name" value="LIAS_N"/>
</dbReference>
<dbReference type="InterPro" id="IPR003698">
    <property type="entry name" value="Lipoyl_synth"/>
</dbReference>
<dbReference type="InterPro" id="IPR007197">
    <property type="entry name" value="rSAM"/>
</dbReference>
<dbReference type="NCBIfam" id="TIGR00510">
    <property type="entry name" value="lipA"/>
    <property type="match status" value="1"/>
</dbReference>
<dbReference type="NCBIfam" id="NF004019">
    <property type="entry name" value="PRK05481.1"/>
    <property type="match status" value="1"/>
</dbReference>
<dbReference type="NCBIfam" id="NF009544">
    <property type="entry name" value="PRK12928.1"/>
    <property type="match status" value="1"/>
</dbReference>
<dbReference type="PANTHER" id="PTHR10949">
    <property type="entry name" value="LIPOYL SYNTHASE"/>
    <property type="match status" value="1"/>
</dbReference>
<dbReference type="PANTHER" id="PTHR10949:SF0">
    <property type="entry name" value="LIPOYL SYNTHASE, MITOCHONDRIAL"/>
    <property type="match status" value="1"/>
</dbReference>
<dbReference type="Pfam" id="PF16881">
    <property type="entry name" value="LIAS_N"/>
    <property type="match status" value="1"/>
</dbReference>
<dbReference type="Pfam" id="PF04055">
    <property type="entry name" value="Radical_SAM"/>
    <property type="match status" value="1"/>
</dbReference>
<dbReference type="SFLD" id="SFLDF00271">
    <property type="entry name" value="lipoyl_synthase"/>
    <property type="match status" value="1"/>
</dbReference>
<dbReference type="SFLD" id="SFLDS00029">
    <property type="entry name" value="Radical_SAM"/>
    <property type="match status" value="1"/>
</dbReference>
<dbReference type="SMART" id="SM00729">
    <property type="entry name" value="Elp3"/>
    <property type="match status" value="1"/>
</dbReference>
<dbReference type="SUPFAM" id="SSF102114">
    <property type="entry name" value="Radical SAM enzymes"/>
    <property type="match status" value="1"/>
</dbReference>
<dbReference type="PROSITE" id="PS51918">
    <property type="entry name" value="RADICAL_SAM"/>
    <property type="match status" value="1"/>
</dbReference>
<keyword id="KW-0004">4Fe-4S</keyword>
<keyword id="KW-0408">Iron</keyword>
<keyword id="KW-0411">Iron-sulfur</keyword>
<keyword id="KW-0479">Metal-binding</keyword>
<keyword id="KW-0496">Mitochondrion</keyword>
<keyword id="KW-1185">Reference proteome</keyword>
<keyword id="KW-0949">S-adenosyl-L-methionine</keyword>
<keyword id="KW-0808">Transferase</keyword>
<keyword id="KW-0809">Transit peptide</keyword>
<organism>
    <name type="scientific">Emericella nidulans (strain FGSC A4 / ATCC 38163 / CBS 112.46 / NRRL 194 / M139)</name>
    <name type="common">Aspergillus nidulans</name>
    <dbReference type="NCBI Taxonomy" id="227321"/>
    <lineage>
        <taxon>Eukaryota</taxon>
        <taxon>Fungi</taxon>
        <taxon>Dikarya</taxon>
        <taxon>Ascomycota</taxon>
        <taxon>Pezizomycotina</taxon>
        <taxon>Eurotiomycetes</taxon>
        <taxon>Eurotiomycetidae</taxon>
        <taxon>Eurotiales</taxon>
        <taxon>Aspergillaceae</taxon>
        <taxon>Aspergillus</taxon>
        <taxon>Aspergillus subgen. Nidulantes</taxon>
    </lineage>
</organism>
<feature type="transit peptide" description="Mitochondrion" evidence="1">
    <location>
        <begin position="1"/>
        <end position="33"/>
    </location>
</feature>
<feature type="chain" id="PRO_0000398267" description="Lipoyl synthase, mitochondrial">
    <location>
        <begin position="34"/>
        <end position="413"/>
    </location>
</feature>
<feature type="domain" description="Radical SAM core" evidence="2">
    <location>
        <begin position="147"/>
        <end position="368"/>
    </location>
</feature>
<feature type="binding site" evidence="1">
    <location>
        <position position="133"/>
    </location>
    <ligand>
        <name>[4Fe-4S] cluster</name>
        <dbReference type="ChEBI" id="CHEBI:49883"/>
        <label>1</label>
    </ligand>
</feature>
<feature type="binding site" evidence="1">
    <location>
        <position position="138"/>
    </location>
    <ligand>
        <name>[4Fe-4S] cluster</name>
        <dbReference type="ChEBI" id="CHEBI:49883"/>
        <label>1</label>
    </ligand>
</feature>
<feature type="binding site" evidence="1">
    <location>
        <position position="144"/>
    </location>
    <ligand>
        <name>[4Fe-4S] cluster</name>
        <dbReference type="ChEBI" id="CHEBI:49883"/>
        <label>1</label>
    </ligand>
</feature>
<feature type="binding site" evidence="1">
    <location>
        <position position="164"/>
    </location>
    <ligand>
        <name>[4Fe-4S] cluster</name>
        <dbReference type="ChEBI" id="CHEBI:49883"/>
        <label>2</label>
        <note>4Fe-4S-S-AdoMet</note>
    </ligand>
</feature>
<feature type="binding site" evidence="1">
    <location>
        <position position="168"/>
    </location>
    <ligand>
        <name>[4Fe-4S] cluster</name>
        <dbReference type="ChEBI" id="CHEBI:49883"/>
        <label>2</label>
        <note>4Fe-4S-S-AdoMet</note>
    </ligand>
</feature>
<feature type="binding site" evidence="1">
    <location>
        <position position="171"/>
    </location>
    <ligand>
        <name>[4Fe-4S] cluster</name>
        <dbReference type="ChEBI" id="CHEBI:49883"/>
        <label>2</label>
        <note>4Fe-4S-S-AdoMet</note>
    </ligand>
</feature>
<feature type="binding site" evidence="1">
    <location>
        <position position="379"/>
    </location>
    <ligand>
        <name>[4Fe-4S] cluster</name>
        <dbReference type="ChEBI" id="CHEBI:49883"/>
        <label>1</label>
    </ligand>
</feature>
<proteinExistence type="inferred from homology"/>
<reference key="1">
    <citation type="journal article" date="2005" name="Nature">
        <title>Sequencing of Aspergillus nidulans and comparative analysis with A. fumigatus and A. oryzae.</title>
        <authorList>
            <person name="Galagan J.E."/>
            <person name="Calvo S.E."/>
            <person name="Cuomo C."/>
            <person name="Ma L.-J."/>
            <person name="Wortman J.R."/>
            <person name="Batzoglou S."/>
            <person name="Lee S.-I."/>
            <person name="Bastuerkmen M."/>
            <person name="Spevak C.C."/>
            <person name="Clutterbuck J."/>
            <person name="Kapitonov V."/>
            <person name="Jurka J."/>
            <person name="Scazzocchio C."/>
            <person name="Farman M.L."/>
            <person name="Butler J."/>
            <person name="Purcell S."/>
            <person name="Harris S."/>
            <person name="Braus G.H."/>
            <person name="Draht O."/>
            <person name="Busch S."/>
            <person name="D'Enfert C."/>
            <person name="Bouchier C."/>
            <person name="Goldman G.H."/>
            <person name="Bell-Pedersen D."/>
            <person name="Griffiths-Jones S."/>
            <person name="Doonan J.H."/>
            <person name="Yu J."/>
            <person name="Vienken K."/>
            <person name="Pain A."/>
            <person name="Freitag M."/>
            <person name="Selker E.U."/>
            <person name="Archer D.B."/>
            <person name="Penalva M.A."/>
            <person name="Oakley B.R."/>
            <person name="Momany M."/>
            <person name="Tanaka T."/>
            <person name="Kumagai T."/>
            <person name="Asai K."/>
            <person name="Machida M."/>
            <person name="Nierman W.C."/>
            <person name="Denning D.W."/>
            <person name="Caddick M.X."/>
            <person name="Hynes M."/>
            <person name="Paoletti M."/>
            <person name="Fischer R."/>
            <person name="Miller B.L."/>
            <person name="Dyer P.S."/>
            <person name="Sachs M.S."/>
            <person name="Osmani S.A."/>
            <person name="Birren B.W."/>
        </authorList>
    </citation>
    <scope>NUCLEOTIDE SEQUENCE [LARGE SCALE GENOMIC DNA]</scope>
    <source>
        <strain>FGSC A4 / ATCC 38163 / CBS 112.46 / NRRL 194 / M139</strain>
    </source>
</reference>
<reference key="2">
    <citation type="journal article" date="2009" name="Fungal Genet. Biol.">
        <title>The 2008 update of the Aspergillus nidulans genome annotation: a community effort.</title>
        <authorList>
            <person name="Wortman J.R."/>
            <person name="Gilsenan J.M."/>
            <person name="Joardar V."/>
            <person name="Deegan J."/>
            <person name="Clutterbuck J."/>
            <person name="Andersen M.R."/>
            <person name="Archer D."/>
            <person name="Bencina M."/>
            <person name="Braus G."/>
            <person name="Coutinho P."/>
            <person name="von Dohren H."/>
            <person name="Doonan J."/>
            <person name="Driessen A.J."/>
            <person name="Durek P."/>
            <person name="Espeso E."/>
            <person name="Fekete E."/>
            <person name="Flipphi M."/>
            <person name="Estrada C.G."/>
            <person name="Geysens S."/>
            <person name="Goldman G."/>
            <person name="de Groot P.W."/>
            <person name="Hansen K."/>
            <person name="Harris S.D."/>
            <person name="Heinekamp T."/>
            <person name="Helmstaedt K."/>
            <person name="Henrissat B."/>
            <person name="Hofmann G."/>
            <person name="Homan T."/>
            <person name="Horio T."/>
            <person name="Horiuchi H."/>
            <person name="James S."/>
            <person name="Jones M."/>
            <person name="Karaffa L."/>
            <person name="Karanyi Z."/>
            <person name="Kato M."/>
            <person name="Keller N."/>
            <person name="Kelly D.E."/>
            <person name="Kiel J.A."/>
            <person name="Kim J.M."/>
            <person name="van der Klei I.J."/>
            <person name="Klis F.M."/>
            <person name="Kovalchuk A."/>
            <person name="Krasevec N."/>
            <person name="Kubicek C.P."/>
            <person name="Liu B."/>
            <person name="Maccabe A."/>
            <person name="Meyer V."/>
            <person name="Mirabito P."/>
            <person name="Miskei M."/>
            <person name="Mos M."/>
            <person name="Mullins J."/>
            <person name="Nelson D.R."/>
            <person name="Nielsen J."/>
            <person name="Oakley B.R."/>
            <person name="Osmani S.A."/>
            <person name="Pakula T."/>
            <person name="Paszewski A."/>
            <person name="Paulsen I."/>
            <person name="Pilsyk S."/>
            <person name="Pocsi I."/>
            <person name="Punt P.J."/>
            <person name="Ram A.F."/>
            <person name="Ren Q."/>
            <person name="Robellet X."/>
            <person name="Robson G."/>
            <person name="Seiboth B."/>
            <person name="van Solingen P."/>
            <person name="Specht T."/>
            <person name="Sun J."/>
            <person name="Taheri-Talesh N."/>
            <person name="Takeshita N."/>
            <person name="Ussery D."/>
            <person name="vanKuyk P.A."/>
            <person name="Visser H."/>
            <person name="van de Vondervoort P.J."/>
            <person name="de Vries R.P."/>
            <person name="Walton J."/>
            <person name="Xiang X."/>
            <person name="Xiong Y."/>
            <person name="Zeng A.P."/>
            <person name="Brandt B.W."/>
            <person name="Cornell M.J."/>
            <person name="van den Hondel C.A."/>
            <person name="Visser J."/>
            <person name="Oliver S.G."/>
            <person name="Turner G."/>
        </authorList>
    </citation>
    <scope>GENOME REANNOTATION</scope>
    <source>
        <strain>FGSC A4 / ATCC 38163 / CBS 112.46 / NRRL 194 / M139</strain>
    </source>
</reference>
<accession>Q5AQE4</accession>
<accession>C8VAP9</accession>
<name>LIPA_EMENI</name>
<protein>
    <recommendedName>
        <fullName evidence="1">Lipoyl synthase, mitochondrial</fullName>
        <ecNumber evidence="1">2.8.1.8</ecNumber>
    </recommendedName>
    <alternativeName>
        <fullName evidence="1">Lipoate synthase</fullName>
        <shortName evidence="1">LS</shortName>
        <shortName evidence="1">Lip-syn</shortName>
    </alternativeName>
    <alternativeName>
        <fullName evidence="1">Lipoic acid synthase</fullName>
    </alternativeName>
</protein>
<evidence type="ECO:0000255" key="1">
    <source>
        <dbReference type="HAMAP-Rule" id="MF_03123"/>
    </source>
</evidence>
<evidence type="ECO:0000255" key="2">
    <source>
        <dbReference type="PROSITE-ProRule" id="PRU01266"/>
    </source>
</evidence>
<gene>
    <name type="ORF">AN9486</name>
</gene>